<feature type="chain" id="PRO_1000013212" description="UDP-3-O-acyl-N-acetylglucosamine deacetylase">
    <location>
        <begin position="1"/>
        <end position="304"/>
    </location>
</feature>
<feature type="active site" description="Proton donor" evidence="1">
    <location>
        <position position="264"/>
    </location>
</feature>
<feature type="binding site" evidence="1">
    <location>
        <position position="78"/>
    </location>
    <ligand>
        <name>Zn(2+)</name>
        <dbReference type="ChEBI" id="CHEBI:29105"/>
    </ligand>
</feature>
<feature type="binding site" evidence="1">
    <location>
        <position position="237"/>
    </location>
    <ligand>
        <name>Zn(2+)</name>
        <dbReference type="ChEBI" id="CHEBI:29105"/>
    </ligand>
</feature>
<feature type="binding site" evidence="1">
    <location>
        <position position="241"/>
    </location>
    <ligand>
        <name>Zn(2+)</name>
        <dbReference type="ChEBI" id="CHEBI:29105"/>
    </ligand>
</feature>
<proteinExistence type="inferred from homology"/>
<evidence type="ECO:0000255" key="1">
    <source>
        <dbReference type="HAMAP-Rule" id="MF_00388"/>
    </source>
</evidence>
<organism>
    <name type="scientific">Legionella pneumophila (strain Corby)</name>
    <dbReference type="NCBI Taxonomy" id="400673"/>
    <lineage>
        <taxon>Bacteria</taxon>
        <taxon>Pseudomonadati</taxon>
        <taxon>Pseudomonadota</taxon>
        <taxon>Gammaproteobacteria</taxon>
        <taxon>Legionellales</taxon>
        <taxon>Legionellaceae</taxon>
        <taxon>Legionella</taxon>
    </lineage>
</organism>
<dbReference type="EC" id="3.5.1.108" evidence="1"/>
<dbReference type="EMBL" id="CP000675">
    <property type="protein sequence ID" value="ABQ54518.1"/>
    <property type="molecule type" value="Genomic_DNA"/>
</dbReference>
<dbReference type="RefSeq" id="WP_010948308.1">
    <property type="nucleotide sequence ID" value="NZ_JAPMSS010000010.1"/>
</dbReference>
<dbReference type="SMR" id="A5IAW8"/>
<dbReference type="GeneID" id="57036607"/>
<dbReference type="KEGG" id="lpc:LPC_0533"/>
<dbReference type="HOGENOM" id="CLU_046528_1_0_6"/>
<dbReference type="UniPathway" id="UPA00359">
    <property type="reaction ID" value="UER00478"/>
</dbReference>
<dbReference type="GO" id="GO:0016020">
    <property type="term" value="C:membrane"/>
    <property type="evidence" value="ECO:0007669"/>
    <property type="project" value="GOC"/>
</dbReference>
<dbReference type="GO" id="GO:0046872">
    <property type="term" value="F:metal ion binding"/>
    <property type="evidence" value="ECO:0007669"/>
    <property type="project" value="UniProtKB-KW"/>
</dbReference>
<dbReference type="GO" id="GO:0103117">
    <property type="term" value="F:UDP-3-O-acyl-N-acetylglucosamine deacetylase activity"/>
    <property type="evidence" value="ECO:0007669"/>
    <property type="project" value="UniProtKB-UniRule"/>
</dbReference>
<dbReference type="GO" id="GO:0009245">
    <property type="term" value="P:lipid A biosynthetic process"/>
    <property type="evidence" value="ECO:0007669"/>
    <property type="project" value="UniProtKB-UniRule"/>
</dbReference>
<dbReference type="Gene3D" id="3.30.230.20">
    <property type="entry name" value="lpxc deacetylase, domain 1"/>
    <property type="match status" value="1"/>
</dbReference>
<dbReference type="Gene3D" id="3.30.1700.10">
    <property type="entry name" value="lpxc deacetylase, domain 2"/>
    <property type="match status" value="1"/>
</dbReference>
<dbReference type="HAMAP" id="MF_00388">
    <property type="entry name" value="LpxC"/>
    <property type="match status" value="1"/>
</dbReference>
<dbReference type="InterPro" id="IPR020568">
    <property type="entry name" value="Ribosomal_Su5_D2-typ_SF"/>
</dbReference>
<dbReference type="InterPro" id="IPR004463">
    <property type="entry name" value="UDP-acyl_GlcNac_deAcase"/>
</dbReference>
<dbReference type="InterPro" id="IPR011334">
    <property type="entry name" value="UDP-acyl_GlcNac_deAcase_C"/>
</dbReference>
<dbReference type="InterPro" id="IPR015870">
    <property type="entry name" value="UDP-acyl_N-AcGlcN_deAcase_N"/>
</dbReference>
<dbReference type="NCBIfam" id="TIGR00325">
    <property type="entry name" value="lpxC"/>
    <property type="match status" value="1"/>
</dbReference>
<dbReference type="PANTHER" id="PTHR33694">
    <property type="entry name" value="UDP-3-O-ACYL-N-ACETYLGLUCOSAMINE DEACETYLASE 1, MITOCHONDRIAL-RELATED"/>
    <property type="match status" value="1"/>
</dbReference>
<dbReference type="PANTHER" id="PTHR33694:SF1">
    <property type="entry name" value="UDP-3-O-ACYL-N-ACETYLGLUCOSAMINE DEACETYLASE 1, MITOCHONDRIAL-RELATED"/>
    <property type="match status" value="1"/>
</dbReference>
<dbReference type="Pfam" id="PF03331">
    <property type="entry name" value="LpxC"/>
    <property type="match status" value="1"/>
</dbReference>
<dbReference type="SUPFAM" id="SSF54211">
    <property type="entry name" value="Ribosomal protein S5 domain 2-like"/>
    <property type="match status" value="2"/>
</dbReference>
<gene>
    <name evidence="1" type="primary">lpxC</name>
    <name type="ordered locus">LPC_0533</name>
</gene>
<comment type="function">
    <text evidence="1">Catalyzes the hydrolysis of UDP-3-O-myristoyl-N-acetylglucosamine to form UDP-3-O-myristoylglucosamine and acetate, the committed step in lipid A biosynthesis.</text>
</comment>
<comment type="catalytic activity">
    <reaction evidence="1">
        <text>a UDP-3-O-[(3R)-3-hydroxyacyl]-N-acetyl-alpha-D-glucosamine + H2O = a UDP-3-O-[(3R)-3-hydroxyacyl]-alpha-D-glucosamine + acetate</text>
        <dbReference type="Rhea" id="RHEA:67816"/>
        <dbReference type="ChEBI" id="CHEBI:15377"/>
        <dbReference type="ChEBI" id="CHEBI:30089"/>
        <dbReference type="ChEBI" id="CHEBI:137740"/>
        <dbReference type="ChEBI" id="CHEBI:173225"/>
        <dbReference type="EC" id="3.5.1.108"/>
    </reaction>
</comment>
<comment type="cofactor">
    <cofactor evidence="1">
        <name>Zn(2+)</name>
        <dbReference type="ChEBI" id="CHEBI:29105"/>
    </cofactor>
</comment>
<comment type="pathway">
    <text evidence="1">Glycolipid biosynthesis; lipid IV(A) biosynthesis; lipid IV(A) from (3R)-3-hydroxytetradecanoyl-[acyl-carrier-protein] and UDP-N-acetyl-alpha-D-glucosamine: step 2/6.</text>
</comment>
<comment type="similarity">
    <text evidence="1">Belongs to the LpxC family.</text>
</comment>
<name>LPXC_LEGPC</name>
<accession>A5IAW8</accession>
<sequence>MIKQRTPKKVIQATGVGLHSGEKVLLTLRPAPVNTGIVFRRVDLSPVVEIPASYEYVGDTMLCTTLHHGKVKIATVEHLLSALAGLGIDNAYIDVNAPEIPIMDGSAAPFVFLIQSAGIREQNAAKRYIRILKPIRVEENGKYVQFLPHKGYKITFTIGFEHPVFNDRPQTVSFDFSGTSYVKEVCRARTFGFLSDYEKLRECDLAKGGSLDNAIVVDDYRVLNEDGLRFESEFVTHKVLDAIGDLYLLGSSLIGAFEGYKSGHELNNRLLRELMVRQDAWEYTYFDTENYLPAVHPEYYPVEA</sequence>
<protein>
    <recommendedName>
        <fullName evidence="1">UDP-3-O-acyl-N-acetylglucosamine deacetylase</fullName>
        <shortName evidence="1">UDP-3-O-acyl-GlcNAc deacetylase</shortName>
        <ecNumber evidence="1">3.5.1.108</ecNumber>
    </recommendedName>
    <alternativeName>
        <fullName evidence="1">UDP-3-O-[R-3-hydroxymyristoyl]-N-acetylglucosamine deacetylase</fullName>
    </alternativeName>
</protein>
<reference key="1">
    <citation type="submission" date="2006-11" db="EMBL/GenBank/DDBJ databases">
        <title>Identification and characterization of a new conjugation/ type IVA secretion system (trb/tra) of L. pneumophila Corby localized on a mobile genomic island.</title>
        <authorList>
            <person name="Gloeckner G."/>
            <person name="Albert-Weissenberger C."/>
            <person name="Weinmann E."/>
            <person name="Jacobi S."/>
            <person name="Schunder E."/>
            <person name="Steinert M."/>
            <person name="Buchrieser C."/>
            <person name="Hacker J."/>
            <person name="Heuner K."/>
        </authorList>
    </citation>
    <scope>NUCLEOTIDE SEQUENCE [LARGE SCALE GENOMIC DNA]</scope>
    <source>
        <strain>Corby</strain>
    </source>
</reference>
<keyword id="KW-0378">Hydrolase</keyword>
<keyword id="KW-0441">Lipid A biosynthesis</keyword>
<keyword id="KW-0444">Lipid biosynthesis</keyword>
<keyword id="KW-0443">Lipid metabolism</keyword>
<keyword id="KW-0479">Metal-binding</keyword>
<keyword id="KW-0862">Zinc</keyword>